<protein>
    <recommendedName>
        <fullName evidence="7">Cyclopenase penL</fullName>
        <ecNumber evidence="9">4.1.99.-</ecNumber>
    </recommendedName>
    <alternativeName>
        <fullName evidence="7">Penigequinolones biosynthesis cluster protein L</fullName>
    </alternativeName>
</protein>
<keyword id="KW-0186">Copper</keyword>
<keyword id="KW-0456">Lyase</keyword>
<keyword id="KW-0479">Metal-binding</keyword>
<accession>A0A1B2CTB9</accession>
<dbReference type="EC" id="4.1.99.-" evidence="9"/>
<dbReference type="EMBL" id="KX528209">
    <property type="protein sequence ID" value="ANY57890.1"/>
    <property type="molecule type" value="Genomic_DNA"/>
</dbReference>
<dbReference type="SMR" id="A0A1B2CTB9"/>
<dbReference type="GO" id="GO:0016829">
    <property type="term" value="F:lyase activity"/>
    <property type="evidence" value="ECO:0007669"/>
    <property type="project" value="UniProtKB-KW"/>
</dbReference>
<dbReference type="GO" id="GO:0046872">
    <property type="term" value="F:metal ion binding"/>
    <property type="evidence" value="ECO:0007669"/>
    <property type="project" value="UniProtKB-KW"/>
</dbReference>
<dbReference type="Gene3D" id="1.10.1280.10">
    <property type="entry name" value="Di-copper center containing domain from catechol oxidase"/>
    <property type="match status" value="1"/>
</dbReference>
<dbReference type="Gene3D" id="2.60.40.1520">
    <property type="entry name" value="Hemocyanin, C-terminal domain"/>
    <property type="match status" value="1"/>
</dbReference>
<dbReference type="InterPro" id="IPR008922">
    <property type="entry name" value="Di-copper_centre_dom_sf"/>
</dbReference>
<dbReference type="InterPro" id="IPR013788">
    <property type="entry name" value="Hemocyanin/hexamerin"/>
</dbReference>
<dbReference type="InterPro" id="IPR000896">
    <property type="entry name" value="Hemocyanin/hexamerin_mid_dom"/>
</dbReference>
<dbReference type="InterPro" id="IPR005203">
    <property type="entry name" value="Hemocyanin_C"/>
</dbReference>
<dbReference type="InterPro" id="IPR037020">
    <property type="entry name" value="Hemocyanin_C_sf"/>
</dbReference>
<dbReference type="InterPro" id="IPR014756">
    <property type="entry name" value="Ig_E-set"/>
</dbReference>
<dbReference type="PANTHER" id="PTHR11511">
    <property type="entry name" value="LARVAL STORAGE PROTEIN/PHENOLOXIDASE"/>
    <property type="match status" value="1"/>
</dbReference>
<dbReference type="PANTHER" id="PTHR11511:SF4">
    <property type="entry name" value="PHENOLOXIDASE 2-RELATED"/>
    <property type="match status" value="1"/>
</dbReference>
<dbReference type="Pfam" id="PF03723">
    <property type="entry name" value="Hemocyanin_C"/>
    <property type="match status" value="1"/>
</dbReference>
<dbReference type="Pfam" id="PF00372">
    <property type="entry name" value="Hemocyanin_M"/>
    <property type="match status" value="1"/>
</dbReference>
<dbReference type="PRINTS" id="PR00187">
    <property type="entry name" value="HAEMOCYANIN"/>
</dbReference>
<dbReference type="SUPFAM" id="SSF48056">
    <property type="entry name" value="Di-copper centre-containing domain"/>
    <property type="match status" value="1"/>
</dbReference>
<dbReference type="SUPFAM" id="SSF81296">
    <property type="entry name" value="E set domains"/>
    <property type="match status" value="1"/>
</dbReference>
<gene>
    <name evidence="7" type="primary">penL</name>
</gene>
<sequence>MFALPVRKFHEPYYERKPSHAKKINGVYQTLTTAGMEVEDGIRKAKELLKENVNPELMRRALGIYLIHSRDAQRRKIVVPPLMSHVSFLSNRSIPPQTVSTTAGPTVVAGEVVTADTFQGPALLSYWREDYDLNDFHYYWHMMFPGTTVNVGGENIKLMDRPGEHFLQIVSQMVARYETEGLCWNLPLVRPWNQYDDILEHGYVPVPGLIEYYGGYPPFSSWYSVRNPDIPDLPQVDVSRKQMETWRDNIYEAIKNGYFWGKKQGTNAERTPLPLTPDNCMDLVGSVVDAEYLTLPPSPDGLSVDGDLYGNLHNYGHGNFAEISYQNYPTKAAQYGLMISNFGALRDPCFWPWHKHIQYFRRLASAKFPQDITAHRAHVRLSSLVICPQRKSTSISREDGITAFLGPPALNLLESKAKIGHEPYQWSVDIQSTRSSPPSEDSPQALTLRLFIAAGDLVNDYHSWIEMDRVTVHLTSKSTLTKVRLDTDSSIARKMGSYSELDPKSTSPWDRCRWPQHMMLPVGKVEGMPFVAFCMATDDTTAPRTRVPNSNTFEAIQSDQRLSDPLGMGYPFNRAWVQDVMDNAGKASIRQIISDAQTYPFMTTTTFRIFRATKMFQDSILNPYIPPASVTWFNTIKDYFLESDKTCMLYAYGYDLGNYDHVRLHSGAILDATSSKRMPLQMSPWSQENPDPNHPLWTPEMCDTFRAWMLNGCPKGTDSA</sequence>
<feature type="chain" id="PRO_0000455368" description="Cyclopenase penL">
    <location>
        <begin position="1"/>
        <end position="720"/>
    </location>
</feature>
<feature type="binding site" evidence="4">
    <location>
        <position position="137"/>
    </location>
    <ligand>
        <name>Cu cation</name>
        <dbReference type="ChEBI" id="CHEBI:23378"/>
        <label>A</label>
    </ligand>
</feature>
<feature type="binding site" evidence="4">
    <location>
        <position position="141"/>
    </location>
    <ligand>
        <name>Cu cation</name>
        <dbReference type="ChEBI" id="CHEBI:23378"/>
        <label>A</label>
    </ligand>
</feature>
<feature type="binding site" evidence="4">
    <location>
        <position position="313"/>
    </location>
    <ligand>
        <name>Cu cation</name>
        <dbReference type="ChEBI" id="CHEBI:23378"/>
        <label>B</label>
    </ligand>
</feature>
<name>PENL_PENTH</name>
<proteinExistence type="inferred from homology"/>
<reference key="1">
    <citation type="journal article" date="2015" name="J. Am. Chem. Soc.">
        <title>Tandem prenyltransferases catalyze isoprenoid elongation and complexity generation in biosynthesis of quinolone alkaloids.</title>
        <authorList>
            <person name="Zou Y."/>
            <person name="Zhan Z."/>
            <person name="Li D."/>
            <person name="Tang M."/>
            <person name="Cacho R.A."/>
            <person name="Watanabe K."/>
            <person name="Tang Y."/>
        </authorList>
    </citation>
    <scope>NUCLEOTIDE SEQUENCE [GENOMIC DNA]</scope>
    <scope>FUNCTION</scope>
    <scope>PATHWAY</scope>
    <source>
        <strain>IBT 5891 / CBS 111225</strain>
    </source>
</reference>
<reference key="2">
    <citation type="journal article" date="2017" name="Nat. Chem. Biol.">
        <title>Enzyme-catalyzed cationic epoxide rearrangements in quinolone alkaloid biosynthesis.</title>
        <authorList>
            <person name="Zou Y."/>
            <person name="Garcia-Borras M."/>
            <person name="Tang M.C."/>
            <person name="Hirayama Y."/>
            <person name="Li D.H."/>
            <person name="Li L."/>
            <person name="Watanabe K."/>
            <person name="Houk K.N."/>
            <person name="Tang Y."/>
        </authorList>
    </citation>
    <scope>FUNCTION</scope>
</reference>
<evidence type="ECO:0000250" key="1">
    <source>
        <dbReference type="UniProtKB" id="C8VJQ3"/>
    </source>
</evidence>
<evidence type="ECO:0000250" key="2">
    <source>
        <dbReference type="UniProtKB" id="Q5AR53"/>
    </source>
</evidence>
<evidence type="ECO:0000250" key="3">
    <source>
        <dbReference type="UniProtKB" id="Q5AR54"/>
    </source>
</evidence>
<evidence type="ECO:0000250" key="4">
    <source>
        <dbReference type="UniProtKB" id="Q9ZP19"/>
    </source>
</evidence>
<evidence type="ECO:0000269" key="5">
    <source>
    </source>
</evidence>
<evidence type="ECO:0000269" key="6">
    <source>
    </source>
</evidence>
<evidence type="ECO:0000303" key="7">
    <source>
    </source>
</evidence>
<evidence type="ECO:0000305" key="8"/>
<evidence type="ECO:0000305" key="9">
    <source>
    </source>
</evidence>
<organism>
    <name type="scientific">Penicillium thymicola</name>
    <dbReference type="NCBI Taxonomy" id="293382"/>
    <lineage>
        <taxon>Eukaryota</taxon>
        <taxon>Fungi</taxon>
        <taxon>Dikarya</taxon>
        <taxon>Ascomycota</taxon>
        <taxon>Pezizomycotina</taxon>
        <taxon>Eurotiomycetes</taxon>
        <taxon>Eurotiomycetidae</taxon>
        <taxon>Eurotiales</taxon>
        <taxon>Aspergillaceae</taxon>
        <taxon>Penicillium</taxon>
    </lineage>
</organism>
<comment type="function">
    <text evidence="1 2 3 5 6 9">Cyclopenase; part of the gene cluster that mediates the biosynthesis of penigequinolones, potent insecticidal alkaloids that contain a highly modified 10-carbon prenyl group (PubMed:25859931). The first stage is catalyzed by the nonribosomal peptide synthetase penN that condenses anthranilic acid and O-methyl-L-tyrosine to produce 4'-methoxycyclopeptin (By similarity). 4'-methoxycyclopeptin is then converted to 4'-methoxydehydrocyclopeptin by the ketoglutarate-dependent dioxygenase penM through dehydrogenation to form a double bond between C-alpha and C-beta of the O-methyltyrosine side chain (By similarity). PenM also converts its first product methoxydehydrocyclopeptin to 4'-methoxycyclopenin (By similarity). The following conversion of 4'methoxycyclopenin into 4'-methoxyviridicatin is catalyzed by the cyclopenase penL (By similarity). 4'-methoxyviridicatin is the precursor of quinolone natural products, and is further converted to quinolinone B (Probable). The prenyltransferase penI then catalyzes the canonical Friedel-Crafts alkylation of quinolinone B with dimethylallyl cation to yield dimethylallyl quinolone, which is subjected to FAD-dependent dehydrogenation by the FAD-linked oxidoreductase penH to yield conjugated aryl diene (PubMed:25859931). The delta(3') double bond then serves as the site of the second alkylation with DMAPP catalyzed by the prenyltransferase penG to yield a carbenium ion intermediate, which can be attacked by H(2)O to yield a styrenyl quinolone containing a C3'-hydroxyprenyl chain, or undergo cyclization to yield yaequinolones J1 and J2 (PubMed:25859931). The conversion of the styrenyl quinolone into the tetrahydrofuran-containing yaequinolone C is performed by the FAD-dependent monooxygenase penE and involves epoxidation of the terminal C7'-C8' olefin, followed by epoxide ring opening initiated by the C3' hydroxyl group (PubMed:25859931). The predicted cysteine hydrolase penJ acts as an epoxide hydrolase that enhances the rate of the 5-exo-tet cyclization step, increasing the yield of yaequinolone C (PubMed:25859931, PubMed:28114276). PenF catalyzes the cationic rearrangement of the epoxide formed by penE (before ring opening to produce yaequinolone C) into yaequinolone D (PubMed:28114276). Finally, the short-chain dehydrogenase/reductase (SDR)-like reductase penD, catalyzes both the dehydration of yaequinolone D and the reduction of the resulting oxonium to yield penigequinolone (PubMed:28114276).</text>
</comment>
<comment type="catalytic activity">
    <reaction evidence="1">
        <text>(-)-cyclopenine = viridicatin + methyl isocyanate + H(+)</text>
        <dbReference type="Rhea" id="RHEA:73415"/>
        <dbReference type="ChEBI" id="CHEBI:15378"/>
        <dbReference type="ChEBI" id="CHEBI:59059"/>
        <dbReference type="ChEBI" id="CHEBI:193522"/>
        <dbReference type="ChEBI" id="CHEBI:193553"/>
    </reaction>
    <physiologicalReaction direction="left-to-right" evidence="1">
        <dbReference type="Rhea" id="RHEA:73416"/>
    </physiologicalReaction>
</comment>
<comment type="catalytic activity">
    <reaction evidence="1">
        <text>(-)-4'-methoxycyclopenine = 4'-methoxyviridicatin + methyl isocyanate + H(+)</text>
        <dbReference type="Rhea" id="RHEA:74463"/>
        <dbReference type="ChEBI" id="CHEBI:15378"/>
        <dbReference type="ChEBI" id="CHEBI:59059"/>
        <dbReference type="ChEBI" id="CHEBI:193535"/>
        <dbReference type="ChEBI" id="CHEBI:193536"/>
    </reaction>
    <physiologicalReaction direction="left-to-right" evidence="1">
        <dbReference type="Rhea" id="RHEA:74464"/>
    </physiologicalReaction>
</comment>
<comment type="cofactor">
    <cofactor evidence="4">
        <name>Cu(2+)</name>
        <dbReference type="ChEBI" id="CHEBI:29036"/>
    </cofactor>
    <text evidence="4">Binds 2 copper ions per subunit.</text>
</comment>
<comment type="pathway">
    <text evidence="9">Secondary metabolite biosynthesis.</text>
</comment>
<comment type="pathway">
    <text evidence="9">Alkaloid biosynthesis.</text>
</comment>
<comment type="pathway">
    <text evidence="9">Mycotoxin biosynthesis.</text>
</comment>
<comment type="similarity">
    <text evidence="8">Belongs to the tyrosinase family.</text>
</comment>